<organism>
    <name type="scientific">Enterococcus faecium</name>
    <name type="common">Streptococcus faecium</name>
    <dbReference type="NCBI Taxonomy" id="1352"/>
    <lineage>
        <taxon>Bacteria</taxon>
        <taxon>Bacillati</taxon>
        <taxon>Bacillota</taxon>
        <taxon>Bacilli</taxon>
        <taxon>Lactobacillales</taxon>
        <taxon>Enterococcaceae</taxon>
        <taxon>Enterococcus</taxon>
    </lineage>
</organism>
<geneLocation type="plasmid">
    <name>pIP816</name>
</geneLocation>
<protein>
    <recommendedName>
        <fullName>Transposase for transposon Tn1546</fullName>
    </recommendedName>
</protein>
<keyword id="KW-0233">DNA recombination</keyword>
<keyword id="KW-0238">DNA-binding</keyword>
<keyword id="KW-0614">Plasmid</keyword>
<keyword id="KW-0814">Transposable element</keyword>
<keyword id="KW-0815">Transposition</keyword>
<reference key="1">
    <citation type="journal article" date="1993" name="J. Bacteriol.">
        <title>Characterization of Tn1546, a Tn3-related transposon conferring glycopeptide resistance by synthesis of depsipeptide peptidoglycan precursors in Enterococcus faecium BM4147.</title>
        <authorList>
            <person name="Arthur M."/>
            <person name="Molinas C."/>
            <person name="Depardieu F."/>
            <person name="Courvalin P."/>
        </authorList>
    </citation>
    <scope>NUCLEOTIDE SEQUENCE [GENOMIC DNA]</scope>
    <source>
        <strain>BM4147</strain>
    </source>
</reference>
<dbReference type="EMBL" id="M97297">
    <property type="protein sequence ID" value="AAA65951.1"/>
    <property type="molecule type" value="Genomic_DNA"/>
</dbReference>
<dbReference type="PIR" id="A40628">
    <property type="entry name" value="A40628"/>
</dbReference>
<dbReference type="RefSeq" id="WP_000684987.1">
    <property type="nucleotide sequence ID" value="NZ_VYUW01000048.1"/>
</dbReference>
<dbReference type="RefSeq" id="YP_001019040.1">
    <property type="nucleotide sequence ID" value="NC_008821.1"/>
</dbReference>
<dbReference type="RefSeq" id="YP_001974801.1">
    <property type="nucleotide sequence ID" value="NC_010980.1"/>
</dbReference>
<dbReference type="RefSeq" id="YP_002128394.1">
    <property type="nucleotide sequence ID" value="NC_011140.1"/>
</dbReference>
<dbReference type="RefSeq" id="YP_976082.1">
    <property type="nucleotide sequence ID" value="NC_008768.1"/>
</dbReference>
<dbReference type="SMR" id="Q06238"/>
<dbReference type="GO" id="GO:0003677">
    <property type="term" value="F:DNA binding"/>
    <property type="evidence" value="ECO:0007669"/>
    <property type="project" value="UniProtKB-KW"/>
</dbReference>
<dbReference type="GO" id="GO:0004803">
    <property type="term" value="F:transposase activity"/>
    <property type="evidence" value="ECO:0007669"/>
    <property type="project" value="InterPro"/>
</dbReference>
<dbReference type="GO" id="GO:0006313">
    <property type="term" value="P:DNA transposition"/>
    <property type="evidence" value="ECO:0007669"/>
    <property type="project" value="InterPro"/>
</dbReference>
<dbReference type="InterPro" id="IPR025296">
    <property type="entry name" value="DUF4158"/>
</dbReference>
<dbReference type="InterPro" id="IPR047653">
    <property type="entry name" value="Tn3-like_transpos"/>
</dbReference>
<dbReference type="InterPro" id="IPR002513">
    <property type="entry name" value="Tn3_Tnp_DDE_dom"/>
</dbReference>
<dbReference type="NCBIfam" id="NF033527">
    <property type="entry name" value="transpos_Tn3"/>
    <property type="match status" value="1"/>
</dbReference>
<dbReference type="Pfam" id="PF01526">
    <property type="entry name" value="DDE_Tnp_Tn3"/>
    <property type="match status" value="1"/>
</dbReference>
<dbReference type="Pfam" id="PF13700">
    <property type="entry name" value="DUF4158"/>
    <property type="match status" value="1"/>
</dbReference>
<accession>Q06238</accession>
<feature type="chain" id="PRO_0000075432" description="Transposase for transposon Tn1546">
    <location>
        <begin position="1"/>
        <end position="988"/>
    </location>
</feature>
<comment type="function">
    <text>Required for transposition of transposon Tn1546.</text>
</comment>
<comment type="similarity">
    <text evidence="1">Belongs to the transposase 7 family.</text>
</comment>
<sequence length="988" mass="114336">MKIARGRELLTPEQRQAFMQIPEDEWILGTYFTFSKRDLEIVNKRRREENRLGFAVQLAVLRYPGWPYTHIKSIPDSVIQYISKQIGVSPSSLDHYPQRENTLWDHLKEIRSEYDFVTFTLSEYRMTFKYLHQLALENGDAIHLLHECIDFLRKNKIILPAITTLERMVWEARAMAEKKLFNTVSKSLTNEQKEKLEGIITSQHPSESNKTILGWLKEPPGHPSPETFLKIIERLEYIRGMDLETVQISHLHRNRLLQLSRLGSRYEPYAFRDFQENKRYSILTIYLLQLTQELTDKAFEIHDRQILSLLSKGRKAQEEIQKQNGKKLNEKVIHFTNIGQALIKAREEKLDVFKVLESVIEWNTFVSSVEEAQELARPADYDYLDLLQKRFYSLRKYTPTLLRVLEFHSTKANEPLLQAVEIIRGMNESGKRKVPDDSPVDFISKRWKRHLYEDDGTTINRHYYEMAVLTELREHVRAGDVSIVGSRQYRDFEEYLFSEDTWNQSKGNTRLSVSLSFEDYITERTSSFNERLKWLAANSNKLDGVSLEKGKLSLARLEKDVPEEAKKFSASLYQMLPRIKLTDLLMDVAHITGFHEQFTHASNNRKPDKEETIIIMAALLGMGMNIGLSKMAEATPGLTYKQLANVSQWRMYEDAMNKAQAILVNFHHKLQLPFYWGDGTTSSSDGMRMQLGVSSLHADANPHYGTGKGATIYRFTSDQFSSYYTKIIHTNSRDAIHVLDGLLHHETDLNIEEHYTDTAGYTDQIFGLTHLLGFKFAPRIRDLSDSKLFTIDKASEYPKLEAILRGQINTKVIKENYEDVLRLAHSIREGTVSASLIMGKLGSYSRQNSLATALREMGRIEKTIFILNYISDESLRRKIQRGLNKGEAMNGLARAIFFGKQGELRERTIQHQLQRASALNIIINAISIWNTLHLTTAVEYKKRTGSFNEDLLHHMSPLGWEHINLLGEYHFNSEKVVSLNSLRPLKLS</sequence>
<proteinExistence type="inferred from homology"/>
<evidence type="ECO:0000305" key="1"/>
<name>TNP6_ENTFC</name>